<proteinExistence type="inferred from homology"/>
<organism>
    <name type="scientific">Streptococcus pneumoniae (strain Hungary19A-6)</name>
    <dbReference type="NCBI Taxonomy" id="487214"/>
    <lineage>
        <taxon>Bacteria</taxon>
        <taxon>Bacillati</taxon>
        <taxon>Bacillota</taxon>
        <taxon>Bacilli</taxon>
        <taxon>Lactobacillales</taxon>
        <taxon>Streptococcaceae</taxon>
        <taxon>Streptococcus</taxon>
    </lineage>
</organism>
<protein>
    <recommendedName>
        <fullName evidence="1">Chaperonin GroEL</fullName>
        <ecNumber evidence="1">5.6.1.7</ecNumber>
    </recommendedName>
    <alternativeName>
        <fullName evidence="1">60 kDa chaperonin</fullName>
    </alternativeName>
    <alternativeName>
        <fullName evidence="1">Chaperonin-60</fullName>
        <shortName evidence="1">Cpn60</shortName>
    </alternativeName>
</protein>
<reference key="1">
    <citation type="journal article" date="2010" name="Genome Biol.">
        <title>Structure and dynamics of the pan-genome of Streptococcus pneumoniae and closely related species.</title>
        <authorList>
            <person name="Donati C."/>
            <person name="Hiller N.L."/>
            <person name="Tettelin H."/>
            <person name="Muzzi A."/>
            <person name="Croucher N.J."/>
            <person name="Angiuoli S.V."/>
            <person name="Oggioni M."/>
            <person name="Dunning Hotopp J.C."/>
            <person name="Hu F.Z."/>
            <person name="Riley D.R."/>
            <person name="Covacci A."/>
            <person name="Mitchell T.J."/>
            <person name="Bentley S.D."/>
            <person name="Kilian M."/>
            <person name="Ehrlich G.D."/>
            <person name="Rappuoli R."/>
            <person name="Moxon E.R."/>
            <person name="Masignani V."/>
        </authorList>
    </citation>
    <scope>NUCLEOTIDE SEQUENCE [LARGE SCALE GENOMIC DNA]</scope>
    <source>
        <strain>Hungary19A-6</strain>
    </source>
</reference>
<accession>B1I8B2</accession>
<evidence type="ECO:0000255" key="1">
    <source>
        <dbReference type="HAMAP-Rule" id="MF_00600"/>
    </source>
</evidence>
<dbReference type="EC" id="5.6.1.7" evidence="1"/>
<dbReference type="EMBL" id="CP000936">
    <property type="protein sequence ID" value="ACA36891.1"/>
    <property type="molecule type" value="Genomic_DNA"/>
</dbReference>
<dbReference type="RefSeq" id="WP_000031585.1">
    <property type="nucleotide sequence ID" value="NC_010380.1"/>
</dbReference>
<dbReference type="SMR" id="B1I8B2"/>
<dbReference type="KEGG" id="spv:SPH_2050"/>
<dbReference type="HOGENOM" id="CLU_016503_3_0_9"/>
<dbReference type="Proteomes" id="UP000002163">
    <property type="component" value="Chromosome"/>
</dbReference>
<dbReference type="GO" id="GO:0005737">
    <property type="term" value="C:cytoplasm"/>
    <property type="evidence" value="ECO:0007669"/>
    <property type="project" value="UniProtKB-SubCell"/>
</dbReference>
<dbReference type="GO" id="GO:0005524">
    <property type="term" value="F:ATP binding"/>
    <property type="evidence" value="ECO:0007669"/>
    <property type="project" value="UniProtKB-UniRule"/>
</dbReference>
<dbReference type="GO" id="GO:0140662">
    <property type="term" value="F:ATP-dependent protein folding chaperone"/>
    <property type="evidence" value="ECO:0007669"/>
    <property type="project" value="InterPro"/>
</dbReference>
<dbReference type="GO" id="GO:0016853">
    <property type="term" value="F:isomerase activity"/>
    <property type="evidence" value="ECO:0007669"/>
    <property type="project" value="UniProtKB-KW"/>
</dbReference>
<dbReference type="GO" id="GO:0051082">
    <property type="term" value="F:unfolded protein binding"/>
    <property type="evidence" value="ECO:0007669"/>
    <property type="project" value="UniProtKB-UniRule"/>
</dbReference>
<dbReference type="GO" id="GO:0042026">
    <property type="term" value="P:protein refolding"/>
    <property type="evidence" value="ECO:0007669"/>
    <property type="project" value="UniProtKB-UniRule"/>
</dbReference>
<dbReference type="CDD" id="cd03344">
    <property type="entry name" value="GroEL"/>
    <property type="match status" value="1"/>
</dbReference>
<dbReference type="FunFam" id="1.10.560.10:FF:000001">
    <property type="entry name" value="60 kDa chaperonin"/>
    <property type="match status" value="1"/>
</dbReference>
<dbReference type="FunFam" id="3.50.7.10:FF:000001">
    <property type="entry name" value="60 kDa chaperonin"/>
    <property type="match status" value="1"/>
</dbReference>
<dbReference type="Gene3D" id="3.50.7.10">
    <property type="entry name" value="GroEL"/>
    <property type="match status" value="1"/>
</dbReference>
<dbReference type="Gene3D" id="1.10.560.10">
    <property type="entry name" value="GroEL-like equatorial domain"/>
    <property type="match status" value="1"/>
</dbReference>
<dbReference type="Gene3D" id="3.30.260.10">
    <property type="entry name" value="TCP-1-like chaperonin intermediate domain"/>
    <property type="match status" value="1"/>
</dbReference>
<dbReference type="HAMAP" id="MF_00600">
    <property type="entry name" value="CH60"/>
    <property type="match status" value="1"/>
</dbReference>
<dbReference type="InterPro" id="IPR018370">
    <property type="entry name" value="Chaperonin_Cpn60_CS"/>
</dbReference>
<dbReference type="InterPro" id="IPR001844">
    <property type="entry name" value="Cpn60/GroEL"/>
</dbReference>
<dbReference type="InterPro" id="IPR002423">
    <property type="entry name" value="Cpn60/GroEL/TCP-1"/>
</dbReference>
<dbReference type="InterPro" id="IPR027409">
    <property type="entry name" value="GroEL-like_apical_dom_sf"/>
</dbReference>
<dbReference type="InterPro" id="IPR027413">
    <property type="entry name" value="GROEL-like_equatorial_sf"/>
</dbReference>
<dbReference type="InterPro" id="IPR027410">
    <property type="entry name" value="TCP-1-like_intermed_sf"/>
</dbReference>
<dbReference type="NCBIfam" id="TIGR02348">
    <property type="entry name" value="GroEL"/>
    <property type="match status" value="1"/>
</dbReference>
<dbReference type="NCBIfam" id="NF000592">
    <property type="entry name" value="PRK00013.1"/>
    <property type="match status" value="1"/>
</dbReference>
<dbReference type="NCBIfam" id="NF009487">
    <property type="entry name" value="PRK12849.1"/>
    <property type="match status" value="1"/>
</dbReference>
<dbReference type="NCBIfam" id="NF009488">
    <property type="entry name" value="PRK12850.1"/>
    <property type="match status" value="1"/>
</dbReference>
<dbReference type="NCBIfam" id="NF009489">
    <property type="entry name" value="PRK12851.1"/>
    <property type="match status" value="1"/>
</dbReference>
<dbReference type="PANTHER" id="PTHR45633">
    <property type="entry name" value="60 KDA HEAT SHOCK PROTEIN, MITOCHONDRIAL"/>
    <property type="match status" value="1"/>
</dbReference>
<dbReference type="Pfam" id="PF00118">
    <property type="entry name" value="Cpn60_TCP1"/>
    <property type="match status" value="1"/>
</dbReference>
<dbReference type="PRINTS" id="PR00298">
    <property type="entry name" value="CHAPERONIN60"/>
</dbReference>
<dbReference type="SUPFAM" id="SSF52029">
    <property type="entry name" value="GroEL apical domain-like"/>
    <property type="match status" value="1"/>
</dbReference>
<dbReference type="SUPFAM" id="SSF48592">
    <property type="entry name" value="GroEL equatorial domain-like"/>
    <property type="match status" value="1"/>
</dbReference>
<dbReference type="SUPFAM" id="SSF54849">
    <property type="entry name" value="GroEL-intermediate domain like"/>
    <property type="match status" value="1"/>
</dbReference>
<dbReference type="PROSITE" id="PS00296">
    <property type="entry name" value="CHAPERONINS_CPN60"/>
    <property type="match status" value="1"/>
</dbReference>
<feature type="chain" id="PRO_1000130065" description="Chaperonin GroEL">
    <location>
        <begin position="1"/>
        <end position="540"/>
    </location>
</feature>
<feature type="binding site" evidence="1">
    <location>
        <begin position="29"/>
        <end position="32"/>
    </location>
    <ligand>
        <name>ATP</name>
        <dbReference type="ChEBI" id="CHEBI:30616"/>
    </ligand>
</feature>
<feature type="binding site" evidence="1">
    <location>
        <begin position="86"/>
        <end position="90"/>
    </location>
    <ligand>
        <name>ATP</name>
        <dbReference type="ChEBI" id="CHEBI:30616"/>
    </ligand>
</feature>
<feature type="binding site" evidence="1">
    <location>
        <position position="413"/>
    </location>
    <ligand>
        <name>ATP</name>
        <dbReference type="ChEBI" id="CHEBI:30616"/>
    </ligand>
</feature>
<feature type="binding site" evidence="1">
    <location>
        <begin position="476"/>
        <end position="478"/>
    </location>
    <ligand>
        <name>ATP</name>
        <dbReference type="ChEBI" id="CHEBI:30616"/>
    </ligand>
</feature>
<feature type="binding site" evidence="1">
    <location>
        <position position="492"/>
    </location>
    <ligand>
        <name>ATP</name>
        <dbReference type="ChEBI" id="CHEBI:30616"/>
    </ligand>
</feature>
<keyword id="KW-0067">ATP-binding</keyword>
<keyword id="KW-0143">Chaperone</keyword>
<keyword id="KW-0963">Cytoplasm</keyword>
<keyword id="KW-0413">Isomerase</keyword>
<keyword id="KW-0547">Nucleotide-binding</keyword>
<gene>
    <name evidence="1" type="primary">groEL</name>
    <name evidence="1" type="synonym">groL</name>
    <name type="ordered locus">SPH_2050</name>
</gene>
<sequence>MSKEIKFSSDARSAMVRGVDILADTVKVTLGPKGRNVVLEKSFGSPLITNDGVTIAKEIELEDHFENMGAKLVSEVASKTNDIAGDGTTTATVLTQAIVREGIKNVTAGANPIGIRRGIETAVAAAVEALKNNAIPVANKEAIAQVAAVSSRSEKVGEYISEAMEKVGKDGVITIEESRGMETELEVVEGMQFDRGYLSQYMVTDSEKMVADLENPYILITDKKISNIQEILPLLESILQSNRPLLIIADDVDGEALPTLVLNKIRGTFNVVAVKAPGFGDRRKAMLEDIAILTGGTVITEDLGLELKDATIEALGQAARVTVDKDSTVIVEGAGNPEAISNRVAVIKSQIETTTSEFDREKLQERLAKLSGGVAVIKVGAATETELKEMKLRIEDALNATRAAVEEGIVAGGGTALANVIPAVATLELTGDEATGRNIVLRALEEPVRQIAHNAGFEGSIVIDRLKNAELGIGFNAATGEWVNMIDQGIIDPVKVSRSALQNAASVASLILTTEAVVANKPEPVAPAPAMDPSMMGGMM</sequence>
<name>CH60_STRPI</name>
<comment type="function">
    <text evidence="1">Together with its co-chaperonin GroES, plays an essential role in assisting protein folding. The GroEL-GroES system forms a nano-cage that allows encapsulation of the non-native substrate proteins and provides a physical environment optimized to promote and accelerate protein folding.</text>
</comment>
<comment type="catalytic activity">
    <reaction evidence="1">
        <text>ATP + H2O + a folded polypeptide = ADP + phosphate + an unfolded polypeptide.</text>
        <dbReference type="EC" id="5.6.1.7"/>
    </reaction>
</comment>
<comment type="subunit">
    <text evidence="1">Forms a cylinder of 14 subunits composed of two heptameric rings stacked back-to-back. Interacts with the co-chaperonin GroES.</text>
</comment>
<comment type="subcellular location">
    <subcellularLocation>
        <location evidence="1">Cytoplasm</location>
    </subcellularLocation>
</comment>
<comment type="similarity">
    <text evidence="1">Belongs to the chaperonin (HSP60) family.</text>
</comment>